<keyword id="KW-0249">Electron transport</keyword>
<keyword id="KW-0472">Membrane</keyword>
<keyword id="KW-0496">Mitochondrion</keyword>
<keyword id="KW-0999">Mitochondrion inner membrane</keyword>
<keyword id="KW-0520">NAD</keyword>
<keyword id="KW-0679">Respiratory chain</keyword>
<keyword id="KW-1278">Translocase</keyword>
<keyword id="KW-0812">Transmembrane</keyword>
<keyword id="KW-1133">Transmembrane helix</keyword>
<keyword id="KW-0813">Transport</keyword>
<keyword id="KW-0830">Ubiquinone</keyword>
<gene>
    <name type="primary">MT-ND1</name>
    <name type="synonym">MTND1</name>
    <name type="synonym">NADH1</name>
    <name type="synonym">ND1</name>
</gene>
<sequence>MFMINLLVVILSALVAMAFLTLTERKVLGYMQFRKGPNIVGPYGTLQPIADAMKLFTKEPLLPTSSTSTLYLIAPTLALSISLLLWTPLPMPYPLMNFNLGLLFILATSSLAVYSILWSGWASNSNYALIGALRAVAQTISYEVTLAIILLSVLLMSGSFNLQSLITTQEHSWLLFPSWPLAMMWFISTLAETNRAPFDLTEGESELVSGFNIEYAAGSFALFFMAEYMNIIMMNALTTTIFLAAPHNTAAPETYTINFMTKTLLLTTLFLWIRTAYPRFRYDQLMHLLWKNFLPLTLALCMWYISMPTLTSGIPPQT</sequence>
<feature type="chain" id="PRO_0000117472" description="NADH-ubiquinone oxidoreductase chain 1">
    <location>
        <begin position="1"/>
        <end position="318"/>
    </location>
</feature>
<feature type="transmembrane region" description="Helical" evidence="3">
    <location>
        <begin position="2"/>
        <end position="22"/>
    </location>
</feature>
<feature type="transmembrane region" description="Helical" evidence="3">
    <location>
        <begin position="70"/>
        <end position="90"/>
    </location>
</feature>
<feature type="transmembrane region" description="Helical" evidence="3">
    <location>
        <begin position="98"/>
        <end position="118"/>
    </location>
</feature>
<feature type="transmembrane region" description="Helical" evidence="3">
    <location>
        <begin position="140"/>
        <end position="160"/>
    </location>
</feature>
<feature type="transmembrane region" description="Helical" evidence="3">
    <location>
        <begin position="171"/>
        <end position="191"/>
    </location>
</feature>
<feature type="transmembrane region" description="Helical" evidence="3">
    <location>
        <begin position="217"/>
        <end position="237"/>
    </location>
</feature>
<feature type="transmembrane region" description="Helical" evidence="3">
    <location>
        <begin position="253"/>
        <end position="273"/>
    </location>
</feature>
<feature type="transmembrane region" description="Helical" evidence="3">
    <location>
        <begin position="294"/>
        <end position="314"/>
    </location>
</feature>
<comment type="function">
    <text evidence="1">Core subunit of the mitochondrial membrane respiratory chain NADH dehydrogenase (Complex I) which catalyzes electron transfer from NADH through the respiratory chain, using ubiquinone as an electron acceptor. Essential for the catalytic activity and assembly of complex I.</text>
</comment>
<comment type="catalytic activity">
    <reaction evidence="1">
        <text>a ubiquinone + NADH + 5 H(+)(in) = a ubiquinol + NAD(+) + 4 H(+)(out)</text>
        <dbReference type="Rhea" id="RHEA:29091"/>
        <dbReference type="Rhea" id="RHEA-COMP:9565"/>
        <dbReference type="Rhea" id="RHEA-COMP:9566"/>
        <dbReference type="ChEBI" id="CHEBI:15378"/>
        <dbReference type="ChEBI" id="CHEBI:16389"/>
        <dbReference type="ChEBI" id="CHEBI:17976"/>
        <dbReference type="ChEBI" id="CHEBI:57540"/>
        <dbReference type="ChEBI" id="CHEBI:57945"/>
        <dbReference type="EC" id="7.1.1.2"/>
    </reaction>
</comment>
<comment type="subunit">
    <text evidence="2">Core subunit of respiratory chain NADH dehydrogenase (Complex I) which is composed of 45 different subunits.</text>
</comment>
<comment type="subcellular location">
    <subcellularLocation>
        <location evidence="2">Mitochondrion inner membrane</location>
        <topology evidence="3">Multi-pass membrane protein</topology>
    </subcellularLocation>
</comment>
<comment type="similarity">
    <text evidence="4">Belongs to the complex I subunit 1 family.</text>
</comment>
<reference key="1">
    <citation type="journal article" date="1998" name="J. Mol. Evol.">
        <title>Conflict among individual mitochondrial proteins in resolving the phylogeny of eutherian orders.</title>
        <authorList>
            <person name="Cao Y."/>
            <person name="Janke A."/>
            <person name="Waddell P.J."/>
            <person name="Westerman M."/>
            <person name="Takenaka O."/>
            <person name="Murata S."/>
            <person name="Okada N."/>
            <person name="Paeaebo S."/>
            <person name="Hasegawa M."/>
        </authorList>
    </citation>
    <scope>NUCLEOTIDE SEQUENCE [GENOMIC DNA]</scope>
    <source>
        <tissue>Liver</tissue>
    </source>
</reference>
<proteinExistence type="inferred from homology"/>
<dbReference type="EC" id="7.1.1.2" evidence="1"/>
<dbReference type="EMBL" id="AB010972">
    <property type="protein sequence ID" value="BAA32097.1"/>
    <property type="molecule type" value="Genomic_DNA"/>
</dbReference>
<dbReference type="RefSeq" id="YP_008379138.1">
    <property type="nucleotide sequence ID" value="NC_021960.1"/>
</dbReference>
<dbReference type="SMR" id="O78694"/>
<dbReference type="GeneID" id="16489205"/>
<dbReference type="CTD" id="4535"/>
<dbReference type="GO" id="GO:0005743">
    <property type="term" value="C:mitochondrial inner membrane"/>
    <property type="evidence" value="ECO:0000250"/>
    <property type="project" value="UniProtKB"/>
</dbReference>
<dbReference type="GO" id="GO:0008137">
    <property type="term" value="F:NADH dehydrogenase (ubiquinone) activity"/>
    <property type="evidence" value="ECO:0000250"/>
    <property type="project" value="UniProtKB"/>
</dbReference>
<dbReference type="GO" id="GO:0006120">
    <property type="term" value="P:mitochondrial electron transport, NADH to ubiquinone"/>
    <property type="evidence" value="ECO:0000250"/>
    <property type="project" value="UniProtKB"/>
</dbReference>
<dbReference type="GO" id="GO:0032981">
    <property type="term" value="P:mitochondrial respiratory chain complex I assembly"/>
    <property type="evidence" value="ECO:0000250"/>
    <property type="project" value="UniProtKB"/>
</dbReference>
<dbReference type="HAMAP" id="MF_01350">
    <property type="entry name" value="NDH1_NuoH"/>
    <property type="match status" value="1"/>
</dbReference>
<dbReference type="InterPro" id="IPR001694">
    <property type="entry name" value="NADH_UbQ_OxRdtase_su1/FPO"/>
</dbReference>
<dbReference type="InterPro" id="IPR018086">
    <property type="entry name" value="NADH_UbQ_OxRdtase_su1_CS"/>
</dbReference>
<dbReference type="PANTHER" id="PTHR11432">
    <property type="entry name" value="NADH DEHYDROGENASE SUBUNIT 1"/>
    <property type="match status" value="1"/>
</dbReference>
<dbReference type="PANTHER" id="PTHR11432:SF3">
    <property type="entry name" value="NADH-UBIQUINONE OXIDOREDUCTASE CHAIN 1"/>
    <property type="match status" value="1"/>
</dbReference>
<dbReference type="Pfam" id="PF00146">
    <property type="entry name" value="NADHdh"/>
    <property type="match status" value="1"/>
</dbReference>
<dbReference type="PROSITE" id="PS00667">
    <property type="entry name" value="COMPLEX1_ND1_1"/>
    <property type="match status" value="1"/>
</dbReference>
<dbReference type="PROSITE" id="PS00668">
    <property type="entry name" value="COMPLEX1_ND1_2"/>
    <property type="match status" value="1"/>
</dbReference>
<geneLocation type="mitochondrion"/>
<protein>
    <recommendedName>
        <fullName>NADH-ubiquinone oxidoreductase chain 1</fullName>
        <ecNumber evidence="1">7.1.1.2</ecNumber>
    </recommendedName>
    <alternativeName>
        <fullName>NADH dehydrogenase subunit 1</fullName>
    </alternativeName>
</protein>
<organism>
    <name type="scientific">Saguinus oedipus</name>
    <name type="common">Cotton-top tamarin</name>
    <dbReference type="NCBI Taxonomy" id="9490"/>
    <lineage>
        <taxon>Eukaryota</taxon>
        <taxon>Metazoa</taxon>
        <taxon>Chordata</taxon>
        <taxon>Craniata</taxon>
        <taxon>Vertebrata</taxon>
        <taxon>Euteleostomi</taxon>
        <taxon>Mammalia</taxon>
        <taxon>Eutheria</taxon>
        <taxon>Euarchontoglires</taxon>
        <taxon>Primates</taxon>
        <taxon>Haplorrhini</taxon>
        <taxon>Platyrrhini</taxon>
        <taxon>Cebidae</taxon>
        <taxon>Callitrichinae</taxon>
        <taxon>Saguinus</taxon>
    </lineage>
</organism>
<name>NU1M_SAGOE</name>
<accession>O78694</accession>
<evidence type="ECO:0000250" key="1">
    <source>
        <dbReference type="UniProtKB" id="P03886"/>
    </source>
</evidence>
<evidence type="ECO:0000250" key="2">
    <source>
        <dbReference type="UniProtKB" id="P03887"/>
    </source>
</evidence>
<evidence type="ECO:0000255" key="3"/>
<evidence type="ECO:0000305" key="4"/>